<name>HLDD_PARXL</name>
<organism>
    <name type="scientific">Paraburkholderia xenovorans (strain LB400)</name>
    <dbReference type="NCBI Taxonomy" id="266265"/>
    <lineage>
        <taxon>Bacteria</taxon>
        <taxon>Pseudomonadati</taxon>
        <taxon>Pseudomonadota</taxon>
        <taxon>Betaproteobacteria</taxon>
        <taxon>Burkholderiales</taxon>
        <taxon>Burkholderiaceae</taxon>
        <taxon>Paraburkholderia</taxon>
    </lineage>
</organism>
<proteinExistence type="inferred from homology"/>
<comment type="function">
    <text evidence="1">Catalyzes the interconversion between ADP-D-glycero-beta-D-manno-heptose and ADP-L-glycero-beta-D-manno-heptose via an epimerization at carbon 6 of the heptose.</text>
</comment>
<comment type="catalytic activity">
    <reaction evidence="1">
        <text>ADP-D-glycero-beta-D-manno-heptose = ADP-L-glycero-beta-D-manno-heptose</text>
        <dbReference type="Rhea" id="RHEA:17577"/>
        <dbReference type="ChEBI" id="CHEBI:59967"/>
        <dbReference type="ChEBI" id="CHEBI:61506"/>
        <dbReference type="EC" id="5.1.3.20"/>
    </reaction>
</comment>
<comment type="cofactor">
    <cofactor evidence="1">
        <name>NADP(+)</name>
        <dbReference type="ChEBI" id="CHEBI:58349"/>
    </cofactor>
    <text evidence="1">Binds 1 NADP(+) per subunit.</text>
</comment>
<comment type="pathway">
    <text evidence="1">Nucleotide-sugar biosynthesis; ADP-L-glycero-beta-D-manno-heptose biosynthesis; ADP-L-glycero-beta-D-manno-heptose from D-glycero-beta-D-manno-heptose 7-phosphate: step 4/4.</text>
</comment>
<comment type="subunit">
    <text evidence="1">Homopentamer.</text>
</comment>
<comment type="domain">
    <text evidence="1">Contains a large N-terminal NADP-binding domain, and a smaller C-terminal substrate-binding domain.</text>
</comment>
<comment type="similarity">
    <text evidence="1">Belongs to the NAD(P)-dependent epimerase/dehydratase family. HldD subfamily.</text>
</comment>
<sequence>MTLIVTGAAGFIGSNLVKALNERGEQRIIAVDNLTRADKFKNLVDCEIDDYLDKTEFVERFRRGDFGKVRAIFHEGACSDTMETDGRYMMDNNFRYSREVLDVCLAQNIQFLYASSAATYGGSSRFVEEREVEQPLNVYGYSKFLFDQVIRRVLPTAKSQIAGFRYFNVYGPRETHKARMASVAFHNFNQFRAEGKVKLFGEYNGYAAGEQTRDFVSVEDVVKVNLFFFDNPDKSGIFNLGSGRAQPFNDIASTVVNTLRSLNNEPALSLAEQVQRGLIEYISFPDALRGKYQCFTQADQSKLRAAGYDAPFLSVQEGVDRYVRWLFGQV</sequence>
<reference key="1">
    <citation type="journal article" date="2006" name="Proc. Natl. Acad. Sci. U.S.A.">
        <title>Burkholderia xenovorans LB400 harbors a multi-replicon, 9.73-Mbp genome shaped for versatility.</title>
        <authorList>
            <person name="Chain P.S.G."/>
            <person name="Denef V.J."/>
            <person name="Konstantinidis K.T."/>
            <person name="Vergez L.M."/>
            <person name="Agullo L."/>
            <person name="Reyes V.L."/>
            <person name="Hauser L."/>
            <person name="Cordova M."/>
            <person name="Gomez L."/>
            <person name="Gonzalez M."/>
            <person name="Land M."/>
            <person name="Lao V."/>
            <person name="Larimer F."/>
            <person name="LiPuma J.J."/>
            <person name="Mahenthiralingam E."/>
            <person name="Malfatti S.A."/>
            <person name="Marx C.J."/>
            <person name="Parnell J.J."/>
            <person name="Ramette A."/>
            <person name="Richardson P."/>
            <person name="Seeger M."/>
            <person name="Smith D."/>
            <person name="Spilker T."/>
            <person name="Sul W.J."/>
            <person name="Tsoi T.V."/>
            <person name="Ulrich L.E."/>
            <person name="Zhulin I.B."/>
            <person name="Tiedje J.M."/>
        </authorList>
    </citation>
    <scope>NUCLEOTIDE SEQUENCE [LARGE SCALE GENOMIC DNA]</scope>
    <source>
        <strain>LB400</strain>
    </source>
</reference>
<dbReference type="EC" id="5.1.3.20" evidence="1"/>
<dbReference type="EMBL" id="CP000270">
    <property type="protein sequence ID" value="ABE31959.1"/>
    <property type="molecule type" value="Genomic_DNA"/>
</dbReference>
<dbReference type="RefSeq" id="WP_011489473.1">
    <property type="nucleotide sequence ID" value="NC_007951.1"/>
</dbReference>
<dbReference type="SMR" id="Q13VD0"/>
<dbReference type="STRING" id="266265.Bxe_A0988"/>
<dbReference type="KEGG" id="bxb:DR64_3149"/>
<dbReference type="KEGG" id="bxe:Bxe_A0988"/>
<dbReference type="PATRIC" id="fig|266265.5.peg.3592"/>
<dbReference type="eggNOG" id="COG0451">
    <property type="taxonomic scope" value="Bacteria"/>
</dbReference>
<dbReference type="OrthoDB" id="9803010at2"/>
<dbReference type="UniPathway" id="UPA00356">
    <property type="reaction ID" value="UER00440"/>
</dbReference>
<dbReference type="Proteomes" id="UP000001817">
    <property type="component" value="Chromosome 1"/>
</dbReference>
<dbReference type="GO" id="GO:0008712">
    <property type="term" value="F:ADP-glyceromanno-heptose 6-epimerase activity"/>
    <property type="evidence" value="ECO:0007669"/>
    <property type="project" value="UniProtKB-UniRule"/>
</dbReference>
<dbReference type="GO" id="GO:0050661">
    <property type="term" value="F:NADP binding"/>
    <property type="evidence" value="ECO:0007669"/>
    <property type="project" value="InterPro"/>
</dbReference>
<dbReference type="GO" id="GO:0097171">
    <property type="term" value="P:ADP-L-glycero-beta-D-manno-heptose biosynthetic process"/>
    <property type="evidence" value="ECO:0007669"/>
    <property type="project" value="UniProtKB-UniPathway"/>
</dbReference>
<dbReference type="GO" id="GO:0005975">
    <property type="term" value="P:carbohydrate metabolic process"/>
    <property type="evidence" value="ECO:0007669"/>
    <property type="project" value="UniProtKB-UniRule"/>
</dbReference>
<dbReference type="CDD" id="cd05248">
    <property type="entry name" value="ADP_GME_SDR_e"/>
    <property type="match status" value="1"/>
</dbReference>
<dbReference type="Gene3D" id="3.40.50.720">
    <property type="entry name" value="NAD(P)-binding Rossmann-like Domain"/>
    <property type="match status" value="1"/>
</dbReference>
<dbReference type="Gene3D" id="3.90.25.10">
    <property type="entry name" value="UDP-galactose 4-epimerase, domain 1"/>
    <property type="match status" value="1"/>
</dbReference>
<dbReference type="HAMAP" id="MF_01601">
    <property type="entry name" value="Heptose_epimerase"/>
    <property type="match status" value="1"/>
</dbReference>
<dbReference type="InterPro" id="IPR001509">
    <property type="entry name" value="Epimerase_deHydtase"/>
</dbReference>
<dbReference type="InterPro" id="IPR011912">
    <property type="entry name" value="Heptose_epim"/>
</dbReference>
<dbReference type="InterPro" id="IPR036291">
    <property type="entry name" value="NAD(P)-bd_dom_sf"/>
</dbReference>
<dbReference type="NCBIfam" id="TIGR02197">
    <property type="entry name" value="heptose_epim"/>
    <property type="match status" value="1"/>
</dbReference>
<dbReference type="PANTHER" id="PTHR43103:SF3">
    <property type="entry name" value="ADP-L-GLYCERO-D-MANNO-HEPTOSE-6-EPIMERASE"/>
    <property type="match status" value="1"/>
</dbReference>
<dbReference type="PANTHER" id="PTHR43103">
    <property type="entry name" value="NUCLEOSIDE-DIPHOSPHATE-SUGAR EPIMERASE"/>
    <property type="match status" value="1"/>
</dbReference>
<dbReference type="Pfam" id="PF01370">
    <property type="entry name" value="Epimerase"/>
    <property type="match status" value="1"/>
</dbReference>
<dbReference type="SUPFAM" id="SSF51735">
    <property type="entry name" value="NAD(P)-binding Rossmann-fold domains"/>
    <property type="match status" value="1"/>
</dbReference>
<keyword id="KW-0119">Carbohydrate metabolism</keyword>
<keyword id="KW-0413">Isomerase</keyword>
<keyword id="KW-0521">NADP</keyword>
<keyword id="KW-1185">Reference proteome</keyword>
<protein>
    <recommendedName>
        <fullName evidence="1">ADP-L-glycero-D-manno-heptose-6-epimerase</fullName>
        <ecNumber evidence="1">5.1.3.20</ecNumber>
    </recommendedName>
    <alternativeName>
        <fullName evidence="1">ADP-L-glycero-beta-D-manno-heptose-6-epimerase</fullName>
        <shortName evidence="1">ADP-glyceromanno-heptose 6-epimerase</shortName>
        <shortName evidence="1">ADP-hep 6-epimerase</shortName>
        <shortName evidence="1">AGME</shortName>
    </alternativeName>
</protein>
<feature type="chain" id="PRO_0000255725" description="ADP-L-glycero-D-manno-heptose-6-epimerase">
    <location>
        <begin position="1"/>
        <end position="330"/>
    </location>
</feature>
<feature type="active site" description="Proton acceptor" evidence="1">
    <location>
        <position position="139"/>
    </location>
</feature>
<feature type="active site" description="Proton acceptor" evidence="1">
    <location>
        <position position="177"/>
    </location>
</feature>
<feature type="binding site" evidence="1">
    <location>
        <begin position="11"/>
        <end position="12"/>
    </location>
    <ligand>
        <name>NADP(+)</name>
        <dbReference type="ChEBI" id="CHEBI:58349"/>
    </ligand>
</feature>
<feature type="binding site" evidence="1">
    <location>
        <begin position="32"/>
        <end position="33"/>
    </location>
    <ligand>
        <name>NADP(+)</name>
        <dbReference type="ChEBI" id="CHEBI:58349"/>
    </ligand>
</feature>
<feature type="binding site" evidence="1">
    <location>
        <position position="39"/>
    </location>
    <ligand>
        <name>NADP(+)</name>
        <dbReference type="ChEBI" id="CHEBI:58349"/>
    </ligand>
</feature>
<feature type="binding site" evidence="1">
    <location>
        <position position="54"/>
    </location>
    <ligand>
        <name>NADP(+)</name>
        <dbReference type="ChEBI" id="CHEBI:58349"/>
    </ligand>
</feature>
<feature type="binding site" evidence="1">
    <location>
        <begin position="75"/>
        <end position="79"/>
    </location>
    <ligand>
        <name>NADP(+)</name>
        <dbReference type="ChEBI" id="CHEBI:58349"/>
    </ligand>
</feature>
<feature type="binding site" evidence="1">
    <location>
        <position position="92"/>
    </location>
    <ligand>
        <name>NADP(+)</name>
        <dbReference type="ChEBI" id="CHEBI:58349"/>
    </ligand>
</feature>
<feature type="binding site" evidence="1">
    <location>
        <position position="143"/>
    </location>
    <ligand>
        <name>NADP(+)</name>
        <dbReference type="ChEBI" id="CHEBI:58349"/>
    </ligand>
</feature>
<feature type="binding site" evidence="1">
    <location>
        <position position="168"/>
    </location>
    <ligand>
        <name>substrate</name>
    </ligand>
</feature>
<feature type="binding site" evidence="1">
    <location>
        <position position="169"/>
    </location>
    <ligand>
        <name>NADP(+)</name>
        <dbReference type="ChEBI" id="CHEBI:58349"/>
    </ligand>
</feature>
<feature type="binding site" evidence="1">
    <location>
        <position position="177"/>
    </location>
    <ligand>
        <name>NADP(+)</name>
        <dbReference type="ChEBI" id="CHEBI:58349"/>
    </ligand>
</feature>
<feature type="binding site" evidence="1">
    <location>
        <position position="179"/>
    </location>
    <ligand>
        <name>substrate</name>
    </ligand>
</feature>
<feature type="binding site" evidence="1">
    <location>
        <position position="186"/>
    </location>
    <ligand>
        <name>substrate</name>
    </ligand>
</feature>
<feature type="binding site" evidence="1">
    <location>
        <begin position="200"/>
        <end position="203"/>
    </location>
    <ligand>
        <name>substrate</name>
    </ligand>
</feature>
<feature type="binding site" evidence="1">
    <location>
        <position position="213"/>
    </location>
    <ligand>
        <name>substrate</name>
    </ligand>
</feature>
<feature type="binding site" evidence="1">
    <location>
        <position position="292"/>
    </location>
    <ligand>
        <name>substrate</name>
    </ligand>
</feature>
<gene>
    <name evidence="1" type="primary">hldD</name>
    <name type="ordered locus">Bxeno_A3421</name>
    <name type="ORF">Bxe_A0988</name>
</gene>
<accession>Q13VD0</accession>
<evidence type="ECO:0000255" key="1">
    <source>
        <dbReference type="HAMAP-Rule" id="MF_01601"/>
    </source>
</evidence>